<protein>
    <recommendedName>
        <fullName evidence="1">Thymidylate kinase</fullName>
        <ecNumber evidence="1">2.7.4.9</ecNumber>
    </recommendedName>
    <alternativeName>
        <fullName evidence="1">dTMP kinase</fullName>
    </alternativeName>
</protein>
<organism>
    <name type="scientific">Escherichia coli O7:K1 (strain IAI39 / ExPEC)</name>
    <dbReference type="NCBI Taxonomy" id="585057"/>
    <lineage>
        <taxon>Bacteria</taxon>
        <taxon>Pseudomonadati</taxon>
        <taxon>Pseudomonadota</taxon>
        <taxon>Gammaproteobacteria</taxon>
        <taxon>Enterobacterales</taxon>
        <taxon>Enterobacteriaceae</taxon>
        <taxon>Escherichia</taxon>
    </lineage>
</organism>
<sequence>MRSKYIVIEGLEGAGKTTARNVVVETLEQLGIRDMVFTREPGGTQLAEKLRSLVLDIKSVGDEVITDKAEVLMFYAARVQLVETVIKPALANGTWVIGDRHDLSTQAYQGGGRGIDQHMLATLRDAVLGDFRPDLTLYLDVTPEVGLKRARARGELDRIEQESFDFFNRTRARYLELAAQDKSIHTIDATQPLESVMDAIRTTVTNWVKELDA</sequence>
<keyword id="KW-0067">ATP-binding</keyword>
<keyword id="KW-0418">Kinase</keyword>
<keyword id="KW-0545">Nucleotide biosynthesis</keyword>
<keyword id="KW-0547">Nucleotide-binding</keyword>
<keyword id="KW-0808">Transferase</keyword>
<evidence type="ECO:0000255" key="1">
    <source>
        <dbReference type="HAMAP-Rule" id="MF_00165"/>
    </source>
</evidence>
<dbReference type="EC" id="2.7.4.9" evidence="1"/>
<dbReference type="EMBL" id="CU928164">
    <property type="protein sequence ID" value="CAR18190.1"/>
    <property type="molecule type" value="Genomic_DNA"/>
</dbReference>
<dbReference type="RefSeq" id="WP_001257007.1">
    <property type="nucleotide sequence ID" value="NC_011750.1"/>
</dbReference>
<dbReference type="RefSeq" id="YP_002408028.1">
    <property type="nucleotide sequence ID" value="NC_011750.1"/>
</dbReference>
<dbReference type="SMR" id="B7NKI2"/>
<dbReference type="STRING" id="585057.ECIAI39_2063"/>
<dbReference type="KEGG" id="ect:ECIAI39_2063"/>
<dbReference type="PATRIC" id="fig|585057.6.peg.2144"/>
<dbReference type="HOGENOM" id="CLU_049131_0_1_6"/>
<dbReference type="Proteomes" id="UP000000749">
    <property type="component" value="Chromosome"/>
</dbReference>
<dbReference type="GO" id="GO:0005829">
    <property type="term" value="C:cytosol"/>
    <property type="evidence" value="ECO:0007669"/>
    <property type="project" value="TreeGrafter"/>
</dbReference>
<dbReference type="GO" id="GO:0005524">
    <property type="term" value="F:ATP binding"/>
    <property type="evidence" value="ECO:0007669"/>
    <property type="project" value="UniProtKB-UniRule"/>
</dbReference>
<dbReference type="GO" id="GO:0004798">
    <property type="term" value="F:dTMP kinase activity"/>
    <property type="evidence" value="ECO:0007669"/>
    <property type="project" value="UniProtKB-UniRule"/>
</dbReference>
<dbReference type="GO" id="GO:0006233">
    <property type="term" value="P:dTDP biosynthetic process"/>
    <property type="evidence" value="ECO:0007669"/>
    <property type="project" value="InterPro"/>
</dbReference>
<dbReference type="GO" id="GO:0006235">
    <property type="term" value="P:dTTP biosynthetic process"/>
    <property type="evidence" value="ECO:0007669"/>
    <property type="project" value="UniProtKB-UniRule"/>
</dbReference>
<dbReference type="GO" id="GO:0006227">
    <property type="term" value="P:dUDP biosynthetic process"/>
    <property type="evidence" value="ECO:0007669"/>
    <property type="project" value="TreeGrafter"/>
</dbReference>
<dbReference type="CDD" id="cd01672">
    <property type="entry name" value="TMPK"/>
    <property type="match status" value="1"/>
</dbReference>
<dbReference type="FunFam" id="3.40.50.300:FF:000321">
    <property type="entry name" value="Thymidylate kinase"/>
    <property type="match status" value="1"/>
</dbReference>
<dbReference type="Gene3D" id="3.40.50.300">
    <property type="entry name" value="P-loop containing nucleotide triphosphate hydrolases"/>
    <property type="match status" value="1"/>
</dbReference>
<dbReference type="HAMAP" id="MF_00165">
    <property type="entry name" value="Thymidylate_kinase"/>
    <property type="match status" value="1"/>
</dbReference>
<dbReference type="InterPro" id="IPR027417">
    <property type="entry name" value="P-loop_NTPase"/>
</dbReference>
<dbReference type="InterPro" id="IPR039430">
    <property type="entry name" value="Thymidylate_kin-like_dom"/>
</dbReference>
<dbReference type="InterPro" id="IPR018095">
    <property type="entry name" value="Thymidylate_kin_CS"/>
</dbReference>
<dbReference type="InterPro" id="IPR018094">
    <property type="entry name" value="Thymidylate_kinase"/>
</dbReference>
<dbReference type="NCBIfam" id="TIGR00041">
    <property type="entry name" value="DTMP_kinase"/>
    <property type="match status" value="1"/>
</dbReference>
<dbReference type="PANTHER" id="PTHR10344">
    <property type="entry name" value="THYMIDYLATE KINASE"/>
    <property type="match status" value="1"/>
</dbReference>
<dbReference type="PANTHER" id="PTHR10344:SF4">
    <property type="entry name" value="UMP-CMP KINASE 2, MITOCHONDRIAL"/>
    <property type="match status" value="1"/>
</dbReference>
<dbReference type="Pfam" id="PF02223">
    <property type="entry name" value="Thymidylate_kin"/>
    <property type="match status" value="1"/>
</dbReference>
<dbReference type="SUPFAM" id="SSF52540">
    <property type="entry name" value="P-loop containing nucleoside triphosphate hydrolases"/>
    <property type="match status" value="1"/>
</dbReference>
<dbReference type="PROSITE" id="PS01331">
    <property type="entry name" value="THYMIDYLATE_KINASE"/>
    <property type="match status" value="1"/>
</dbReference>
<name>KTHY_ECO7I</name>
<gene>
    <name evidence="1" type="primary">tmk</name>
    <name type="ordered locus">ECIAI39_2063</name>
</gene>
<reference key="1">
    <citation type="journal article" date="2009" name="PLoS Genet.">
        <title>Organised genome dynamics in the Escherichia coli species results in highly diverse adaptive paths.</title>
        <authorList>
            <person name="Touchon M."/>
            <person name="Hoede C."/>
            <person name="Tenaillon O."/>
            <person name="Barbe V."/>
            <person name="Baeriswyl S."/>
            <person name="Bidet P."/>
            <person name="Bingen E."/>
            <person name="Bonacorsi S."/>
            <person name="Bouchier C."/>
            <person name="Bouvet O."/>
            <person name="Calteau A."/>
            <person name="Chiapello H."/>
            <person name="Clermont O."/>
            <person name="Cruveiller S."/>
            <person name="Danchin A."/>
            <person name="Diard M."/>
            <person name="Dossat C."/>
            <person name="Karoui M.E."/>
            <person name="Frapy E."/>
            <person name="Garry L."/>
            <person name="Ghigo J.M."/>
            <person name="Gilles A.M."/>
            <person name="Johnson J."/>
            <person name="Le Bouguenec C."/>
            <person name="Lescat M."/>
            <person name="Mangenot S."/>
            <person name="Martinez-Jehanne V."/>
            <person name="Matic I."/>
            <person name="Nassif X."/>
            <person name="Oztas S."/>
            <person name="Petit M.A."/>
            <person name="Pichon C."/>
            <person name="Rouy Z."/>
            <person name="Ruf C.S."/>
            <person name="Schneider D."/>
            <person name="Tourret J."/>
            <person name="Vacherie B."/>
            <person name="Vallenet D."/>
            <person name="Medigue C."/>
            <person name="Rocha E.P.C."/>
            <person name="Denamur E."/>
        </authorList>
    </citation>
    <scope>NUCLEOTIDE SEQUENCE [LARGE SCALE GENOMIC DNA]</scope>
    <source>
        <strain>IAI39 / ExPEC</strain>
    </source>
</reference>
<proteinExistence type="inferred from homology"/>
<accession>B7NKI2</accession>
<comment type="function">
    <text evidence="1">Phosphorylation of dTMP to form dTDP in both de novo and salvage pathways of dTTP synthesis.</text>
</comment>
<comment type="catalytic activity">
    <reaction evidence="1">
        <text>dTMP + ATP = dTDP + ADP</text>
        <dbReference type="Rhea" id="RHEA:13517"/>
        <dbReference type="ChEBI" id="CHEBI:30616"/>
        <dbReference type="ChEBI" id="CHEBI:58369"/>
        <dbReference type="ChEBI" id="CHEBI:63528"/>
        <dbReference type="ChEBI" id="CHEBI:456216"/>
        <dbReference type="EC" id="2.7.4.9"/>
    </reaction>
</comment>
<comment type="similarity">
    <text evidence="1">Belongs to the thymidylate kinase family.</text>
</comment>
<feature type="chain" id="PRO_1000190764" description="Thymidylate kinase">
    <location>
        <begin position="1"/>
        <end position="213"/>
    </location>
</feature>
<feature type="binding site" evidence="1">
    <location>
        <begin position="10"/>
        <end position="17"/>
    </location>
    <ligand>
        <name>ATP</name>
        <dbReference type="ChEBI" id="CHEBI:30616"/>
    </ligand>
</feature>